<organism>
    <name type="scientific">Dictyostelium discoideum</name>
    <name type="common">Social amoeba</name>
    <dbReference type="NCBI Taxonomy" id="44689"/>
    <lineage>
        <taxon>Eukaryota</taxon>
        <taxon>Amoebozoa</taxon>
        <taxon>Evosea</taxon>
        <taxon>Eumycetozoa</taxon>
        <taxon>Dictyostelia</taxon>
        <taxon>Dictyosteliales</taxon>
        <taxon>Dictyosteliaceae</taxon>
        <taxon>Dictyostelium</taxon>
    </lineage>
</organism>
<accession>Q54VP7</accession>
<keyword id="KW-0175">Coiled coil</keyword>
<keyword id="KW-1185">Reference proteome</keyword>
<name>Y6445_DICDI</name>
<proteinExistence type="predicted"/>
<dbReference type="EMBL" id="AAFI02000035">
    <property type="protein sequence ID" value="EAL67332.1"/>
    <property type="molecule type" value="Genomic_DNA"/>
</dbReference>
<dbReference type="RefSeq" id="XP_641308.1">
    <property type="nucleotide sequence ID" value="XM_636216.1"/>
</dbReference>
<dbReference type="SMR" id="Q54VP7"/>
<dbReference type="FunCoup" id="Q54VP7">
    <property type="interactions" value="82"/>
</dbReference>
<dbReference type="PaxDb" id="44689-DDB0206445"/>
<dbReference type="EnsemblProtists" id="EAL67332">
    <property type="protein sequence ID" value="EAL67332"/>
    <property type="gene ID" value="DDB_G0280211"/>
</dbReference>
<dbReference type="GeneID" id="8622441"/>
<dbReference type="KEGG" id="ddi:DDB_G0280211"/>
<dbReference type="dictyBase" id="DDB_G0280211"/>
<dbReference type="VEuPathDB" id="AmoebaDB:DDB_G0280211"/>
<dbReference type="HOGENOM" id="CLU_1117426_0_0_1"/>
<dbReference type="InParanoid" id="Q54VP7"/>
<dbReference type="OMA" id="WELMDEC"/>
<dbReference type="PRO" id="PR:Q54VP7"/>
<dbReference type="Proteomes" id="UP000002195">
    <property type="component" value="Chromosome 3"/>
</dbReference>
<gene>
    <name type="ORF">DDB_G0280211</name>
</gene>
<protein>
    <recommendedName>
        <fullName>Uncharacterized protein DDB_G0280211</fullName>
    </recommendedName>
</protein>
<sequence>MESTPPRFGLDCRNRNKKDVNIRKQKEILKVDKLKKLEIKKLEDQKKLKEQEEKHRLTLIRLANAPPQTNSINNNNNNNNNIKTNRPPLIYGEDKDKKSLFPEPQDYDVDEPTYETSFCVKLGPNGVFQHELRFTNANARENSDIQKAIELSLKQTDVVIVKNPNDDIENDFVVFNEQPDEREKELEHWELMDECSSSLVNFVTTPYNFSEIEFPRLASTCSTQMLKKNLNQNNPWLNSKSLIANISQK</sequence>
<evidence type="ECO:0000255" key="1"/>
<evidence type="ECO:0000256" key="2">
    <source>
        <dbReference type="SAM" id="MobiDB-lite"/>
    </source>
</evidence>
<feature type="chain" id="PRO_0000352465" description="Uncharacterized protein DDB_G0280211">
    <location>
        <begin position="1"/>
        <end position="249"/>
    </location>
</feature>
<feature type="region of interest" description="Disordered" evidence="2">
    <location>
        <begin position="66"/>
        <end position="97"/>
    </location>
</feature>
<feature type="coiled-coil region" evidence="1">
    <location>
        <begin position="30"/>
        <end position="65"/>
    </location>
</feature>
<reference key="1">
    <citation type="journal article" date="2005" name="Nature">
        <title>The genome of the social amoeba Dictyostelium discoideum.</title>
        <authorList>
            <person name="Eichinger L."/>
            <person name="Pachebat J.A."/>
            <person name="Gloeckner G."/>
            <person name="Rajandream M.A."/>
            <person name="Sucgang R."/>
            <person name="Berriman M."/>
            <person name="Song J."/>
            <person name="Olsen R."/>
            <person name="Szafranski K."/>
            <person name="Xu Q."/>
            <person name="Tunggal B."/>
            <person name="Kummerfeld S."/>
            <person name="Madera M."/>
            <person name="Konfortov B.A."/>
            <person name="Rivero F."/>
            <person name="Bankier A.T."/>
            <person name="Lehmann R."/>
            <person name="Hamlin N."/>
            <person name="Davies R."/>
            <person name="Gaudet P."/>
            <person name="Fey P."/>
            <person name="Pilcher K."/>
            <person name="Chen G."/>
            <person name="Saunders D."/>
            <person name="Sodergren E.J."/>
            <person name="Davis P."/>
            <person name="Kerhornou A."/>
            <person name="Nie X."/>
            <person name="Hall N."/>
            <person name="Anjard C."/>
            <person name="Hemphill L."/>
            <person name="Bason N."/>
            <person name="Farbrother P."/>
            <person name="Desany B."/>
            <person name="Just E."/>
            <person name="Morio T."/>
            <person name="Rost R."/>
            <person name="Churcher C.M."/>
            <person name="Cooper J."/>
            <person name="Haydock S."/>
            <person name="van Driessche N."/>
            <person name="Cronin A."/>
            <person name="Goodhead I."/>
            <person name="Muzny D.M."/>
            <person name="Mourier T."/>
            <person name="Pain A."/>
            <person name="Lu M."/>
            <person name="Harper D."/>
            <person name="Lindsay R."/>
            <person name="Hauser H."/>
            <person name="James K.D."/>
            <person name="Quiles M."/>
            <person name="Madan Babu M."/>
            <person name="Saito T."/>
            <person name="Buchrieser C."/>
            <person name="Wardroper A."/>
            <person name="Felder M."/>
            <person name="Thangavelu M."/>
            <person name="Johnson D."/>
            <person name="Knights A."/>
            <person name="Loulseged H."/>
            <person name="Mungall K.L."/>
            <person name="Oliver K."/>
            <person name="Price C."/>
            <person name="Quail M.A."/>
            <person name="Urushihara H."/>
            <person name="Hernandez J."/>
            <person name="Rabbinowitsch E."/>
            <person name="Steffen D."/>
            <person name="Sanders M."/>
            <person name="Ma J."/>
            <person name="Kohara Y."/>
            <person name="Sharp S."/>
            <person name="Simmonds M.N."/>
            <person name="Spiegler S."/>
            <person name="Tivey A."/>
            <person name="Sugano S."/>
            <person name="White B."/>
            <person name="Walker D."/>
            <person name="Woodward J.R."/>
            <person name="Winckler T."/>
            <person name="Tanaka Y."/>
            <person name="Shaulsky G."/>
            <person name="Schleicher M."/>
            <person name="Weinstock G.M."/>
            <person name="Rosenthal A."/>
            <person name="Cox E.C."/>
            <person name="Chisholm R.L."/>
            <person name="Gibbs R.A."/>
            <person name="Loomis W.F."/>
            <person name="Platzer M."/>
            <person name="Kay R.R."/>
            <person name="Williams J.G."/>
            <person name="Dear P.H."/>
            <person name="Noegel A.A."/>
            <person name="Barrell B.G."/>
            <person name="Kuspa A."/>
        </authorList>
    </citation>
    <scope>NUCLEOTIDE SEQUENCE [LARGE SCALE GENOMIC DNA]</scope>
    <source>
        <strain>AX4</strain>
    </source>
</reference>